<gene>
    <name type="primary">mttC1</name>
    <name type="ordered locus">MA_0529</name>
</gene>
<reference key="1">
    <citation type="journal article" date="2002" name="Genome Res.">
        <title>The genome of Methanosarcina acetivorans reveals extensive metabolic and physiological diversity.</title>
        <authorList>
            <person name="Galagan J.E."/>
            <person name="Nusbaum C."/>
            <person name="Roy A."/>
            <person name="Endrizzi M.G."/>
            <person name="Macdonald P."/>
            <person name="FitzHugh W."/>
            <person name="Calvo S."/>
            <person name="Engels R."/>
            <person name="Smirnov S."/>
            <person name="Atnoor D."/>
            <person name="Brown A."/>
            <person name="Allen N."/>
            <person name="Naylor J."/>
            <person name="Stange-Thomann N."/>
            <person name="DeArellano K."/>
            <person name="Johnson R."/>
            <person name="Linton L."/>
            <person name="McEwan P."/>
            <person name="McKernan K."/>
            <person name="Talamas J."/>
            <person name="Tirrell A."/>
            <person name="Ye W."/>
            <person name="Zimmer A."/>
            <person name="Barber R.D."/>
            <person name="Cann I."/>
            <person name="Graham D.E."/>
            <person name="Grahame D.A."/>
            <person name="Guss A.M."/>
            <person name="Hedderich R."/>
            <person name="Ingram-Smith C."/>
            <person name="Kuettner H.C."/>
            <person name="Krzycki J.A."/>
            <person name="Leigh J.A."/>
            <person name="Li W."/>
            <person name="Liu J."/>
            <person name="Mukhopadhyay B."/>
            <person name="Reeve J.N."/>
            <person name="Smith K."/>
            <person name="Springer T.A."/>
            <person name="Umayam L.A."/>
            <person name="White O."/>
            <person name="White R.H."/>
            <person name="de Macario E.C."/>
            <person name="Ferry J.G."/>
            <person name="Jarrell K.F."/>
            <person name="Jing H."/>
            <person name="Macario A.J.L."/>
            <person name="Paulsen I.T."/>
            <person name="Pritchett M."/>
            <person name="Sowers K.R."/>
            <person name="Swanson R.V."/>
            <person name="Zinder S.H."/>
            <person name="Lander E."/>
            <person name="Metcalf W.W."/>
            <person name="Birren B."/>
        </authorList>
    </citation>
    <scope>NUCLEOTIDE SEQUENCE [LARGE SCALE GENOMIC DNA]</scope>
    <source>
        <strain>ATCC 35395 / DSM 2834 / JCM 12185 / C2A</strain>
    </source>
</reference>
<name>MTTC1_METAC</name>
<proteinExistence type="inferred from homology"/>
<dbReference type="EMBL" id="AE010299">
    <property type="protein sequence ID" value="AAM03973.1"/>
    <property type="molecule type" value="Genomic_DNA"/>
</dbReference>
<dbReference type="RefSeq" id="WP_011020578.1">
    <property type="nucleotide sequence ID" value="NC_003552.1"/>
</dbReference>
<dbReference type="SMR" id="Q8TTA8"/>
<dbReference type="STRING" id="188937.MA_0529"/>
<dbReference type="EnsemblBacteria" id="AAM03973">
    <property type="protein sequence ID" value="AAM03973"/>
    <property type="gene ID" value="MA_0529"/>
</dbReference>
<dbReference type="GeneID" id="1472421"/>
<dbReference type="KEGG" id="mac:MA_0529"/>
<dbReference type="HOGENOM" id="CLU_082102_1_0_2"/>
<dbReference type="InParanoid" id="Q8TTA8"/>
<dbReference type="OrthoDB" id="134276at2157"/>
<dbReference type="PhylomeDB" id="Q8TTA8"/>
<dbReference type="UniPathway" id="UPA00645"/>
<dbReference type="Proteomes" id="UP000002487">
    <property type="component" value="Chromosome"/>
</dbReference>
<dbReference type="GO" id="GO:0031419">
    <property type="term" value="F:cobalamin binding"/>
    <property type="evidence" value="ECO:0007669"/>
    <property type="project" value="InterPro"/>
</dbReference>
<dbReference type="GO" id="GO:0050897">
    <property type="term" value="F:cobalt ion binding"/>
    <property type="evidence" value="ECO:0007669"/>
    <property type="project" value="InterPro"/>
</dbReference>
<dbReference type="GO" id="GO:0008168">
    <property type="term" value="F:methyltransferase activity"/>
    <property type="evidence" value="ECO:0007669"/>
    <property type="project" value="UniProtKB-ARBA"/>
</dbReference>
<dbReference type="GO" id="GO:0015948">
    <property type="term" value="P:methanogenesis"/>
    <property type="evidence" value="ECO:0007669"/>
    <property type="project" value="UniProtKB-KW"/>
</dbReference>
<dbReference type="CDD" id="cd02070">
    <property type="entry name" value="corrinoid_protein_B12-BD"/>
    <property type="match status" value="1"/>
</dbReference>
<dbReference type="FunFam" id="3.40.50.280:FF:000003">
    <property type="entry name" value="Dimethylamine methyltransferase corrinoid protein"/>
    <property type="match status" value="1"/>
</dbReference>
<dbReference type="FunFam" id="1.10.1240.10:FF:000004">
    <property type="entry name" value="Monomethylamine methyltransferase corrinoid protein"/>
    <property type="match status" value="1"/>
</dbReference>
<dbReference type="Gene3D" id="3.40.50.280">
    <property type="entry name" value="Cobalamin-binding domain"/>
    <property type="match status" value="1"/>
</dbReference>
<dbReference type="Gene3D" id="1.10.1240.10">
    <property type="entry name" value="Methionine synthase domain"/>
    <property type="match status" value="1"/>
</dbReference>
<dbReference type="InterPro" id="IPR003759">
    <property type="entry name" value="Cbl-bd_cap"/>
</dbReference>
<dbReference type="InterPro" id="IPR006158">
    <property type="entry name" value="Cobalamin-bd"/>
</dbReference>
<dbReference type="InterPro" id="IPR036724">
    <property type="entry name" value="Cobalamin-bd_sf"/>
</dbReference>
<dbReference type="InterPro" id="IPR012741">
    <property type="entry name" value="Corrinoid_p"/>
</dbReference>
<dbReference type="InterPro" id="IPR050554">
    <property type="entry name" value="Met_Synthase/Corrinoid"/>
</dbReference>
<dbReference type="InterPro" id="IPR036594">
    <property type="entry name" value="Meth_synthase_dom"/>
</dbReference>
<dbReference type="NCBIfam" id="TIGR02370">
    <property type="entry name" value="pyl_corrinoid"/>
    <property type="match status" value="1"/>
</dbReference>
<dbReference type="PANTHER" id="PTHR45833">
    <property type="entry name" value="METHIONINE SYNTHASE"/>
    <property type="match status" value="1"/>
</dbReference>
<dbReference type="PANTHER" id="PTHR45833:SF1">
    <property type="entry name" value="METHIONINE SYNTHASE"/>
    <property type="match status" value="1"/>
</dbReference>
<dbReference type="Pfam" id="PF02310">
    <property type="entry name" value="B12-binding"/>
    <property type="match status" value="1"/>
</dbReference>
<dbReference type="Pfam" id="PF02607">
    <property type="entry name" value="B12-binding_2"/>
    <property type="match status" value="1"/>
</dbReference>
<dbReference type="SMART" id="SM01018">
    <property type="entry name" value="B12-binding_2"/>
    <property type="match status" value="1"/>
</dbReference>
<dbReference type="SUPFAM" id="SSF52242">
    <property type="entry name" value="Cobalamin (vitamin B12)-binding domain"/>
    <property type="match status" value="1"/>
</dbReference>
<dbReference type="SUPFAM" id="SSF47644">
    <property type="entry name" value="Methionine synthase domain"/>
    <property type="match status" value="1"/>
</dbReference>
<dbReference type="PROSITE" id="PS51332">
    <property type="entry name" value="B12_BINDING"/>
    <property type="match status" value="1"/>
</dbReference>
<dbReference type="PROSITE" id="PS51337">
    <property type="entry name" value="B12_BINDING_NTER"/>
    <property type="match status" value="1"/>
</dbReference>
<comment type="function">
    <text evidence="1">Acts probably as a methyl group carrier between MttB and either MtbA or MtaA.</text>
</comment>
<comment type="pathway">
    <text>One-carbon metabolism; methanogenesis from trimethylamine.</text>
</comment>
<comment type="subunit">
    <text evidence="1">Can form a complex with MttB.</text>
</comment>
<comment type="similarity">
    <text evidence="4">Belongs to the methylamine corrinoid protein family.</text>
</comment>
<organism>
    <name type="scientific">Methanosarcina acetivorans (strain ATCC 35395 / DSM 2834 / JCM 12185 / C2A)</name>
    <dbReference type="NCBI Taxonomy" id="188937"/>
    <lineage>
        <taxon>Archaea</taxon>
        <taxon>Methanobacteriati</taxon>
        <taxon>Methanobacteriota</taxon>
        <taxon>Stenosarchaea group</taxon>
        <taxon>Methanomicrobia</taxon>
        <taxon>Methanosarcinales</taxon>
        <taxon>Methanosarcinaceae</taxon>
        <taxon>Methanosarcina</taxon>
    </lineage>
</organism>
<protein>
    <recommendedName>
        <fullName>Trimethylamine corrinoid protein 1</fullName>
        <shortName>TCP 1</shortName>
    </recommendedName>
</protein>
<evidence type="ECO:0000250" key="1"/>
<evidence type="ECO:0000255" key="2">
    <source>
        <dbReference type="PROSITE-ProRule" id="PRU00666"/>
    </source>
</evidence>
<evidence type="ECO:0000255" key="3">
    <source>
        <dbReference type="PROSITE-ProRule" id="PRU00667"/>
    </source>
</evidence>
<evidence type="ECO:0000305" key="4"/>
<feature type="chain" id="PRO_0000216482" description="Trimethylamine corrinoid protein 1">
    <location>
        <begin position="1"/>
        <end position="216"/>
    </location>
</feature>
<feature type="domain" description="B12-binding N-terminal" evidence="3">
    <location>
        <begin position="1"/>
        <end position="92"/>
    </location>
</feature>
<feature type="domain" description="B12-binding" evidence="2">
    <location>
        <begin position="94"/>
        <end position="216"/>
    </location>
</feature>
<feature type="binding site" description="axial binding residue" evidence="1">
    <location>
        <position position="107"/>
    </location>
    <ligand>
        <name>methylcob(III)alamin</name>
        <dbReference type="ChEBI" id="CHEBI:28115"/>
    </ligand>
    <ligandPart>
        <name>Co</name>
        <dbReference type="ChEBI" id="CHEBI:27638"/>
    </ligandPart>
</feature>
<sequence length="216" mass="23130">MASKEEIIAKAKDAITDFDEELAAEVAEEALAAGIDPVELIEKGFTAGMQEVGEQFEQGSLFLPHVLAAAEAMNTGMEVIKPEMEKRKSETKSLGTVVIGTIEGDIHSIGKDIVASMLNIAGFKVVDLGRDVPIKTFVEKAKEVKPQIIASSALMTTTMVNQIQIEEQLKEAGIRDQVKTMVGGAPVTQDWADKIGADLYGESATDVVSKVRAVLL</sequence>
<accession>Q8TTA8</accession>
<keyword id="KW-0170">Cobalt</keyword>
<keyword id="KW-0479">Metal-binding</keyword>
<keyword id="KW-0484">Methanogenesis</keyword>
<keyword id="KW-1185">Reference proteome</keyword>
<keyword id="KW-0677">Repeat</keyword>